<reference key="1">
    <citation type="submission" date="2007-11" db="EMBL/GenBank/DDBJ databases">
        <authorList>
            <consortium name="The Salmonella enterica serovar Arizonae Genome Sequencing Project"/>
            <person name="McClelland M."/>
            <person name="Sanderson E.K."/>
            <person name="Porwollik S."/>
            <person name="Spieth J."/>
            <person name="Clifton W.S."/>
            <person name="Fulton R."/>
            <person name="Chunyan W."/>
            <person name="Wollam A."/>
            <person name="Shah N."/>
            <person name="Pepin K."/>
            <person name="Bhonagiri V."/>
            <person name="Nash W."/>
            <person name="Johnson M."/>
            <person name="Thiruvilangam P."/>
            <person name="Wilson R."/>
        </authorList>
    </citation>
    <scope>NUCLEOTIDE SEQUENCE [LARGE SCALE GENOMIC DNA]</scope>
    <source>
        <strain>ATCC BAA-731 / CDC346-86 / RSK2980</strain>
    </source>
</reference>
<sequence>MTITPQHLIALLPLLIVGLTVVVVMLSIAWRRNHFLNATLSVIGLNAALVSLWFVGQAGAMDVTPLMRVDGFAMLYTGLVLLASLATCTFAYPWLEGYNDNQEEFYLLVLIASLGGILLANANHLAALFLGIELISLPLFGLIGYAFRQKRSLEASIKYTILSAAASSFLLFGMALVYAQSGNLSFEALGKSLGDGMLREPLLLAGFGLMIVGLGFKLSLVPFHLWTPDVYQGAPAPVSTFLATASKIAIFGVVMRLFLYAPVGDSEAVRVVLGIIAFASIIFGNLMALSQTNIKRLLGYSSISHLGYLLVALIALQSGEMSMEAVGVYLAGYLFSSLGAFGVVSLMSSPFRGPDADSLFSYRGLFWHRPVLAAVMTVMMLSLAGIPMTLGFIGKFYVLAVGVQASLWWLVAAVVVGSAIGLYYYLRVAVSLYLHAPQQPGRDAPINWQYSAGGIVVLISALLVLVLGVWPQPLISLVQLATPLM</sequence>
<dbReference type="EC" id="7.1.1.-" evidence="1"/>
<dbReference type="EMBL" id="CP000880">
    <property type="protein sequence ID" value="ABX20509.1"/>
    <property type="molecule type" value="Genomic_DNA"/>
</dbReference>
<dbReference type="SMR" id="A9MJA9"/>
<dbReference type="STRING" id="41514.SARI_00583"/>
<dbReference type="KEGG" id="ses:SARI_00583"/>
<dbReference type="HOGENOM" id="CLU_007100_1_5_6"/>
<dbReference type="Proteomes" id="UP000002084">
    <property type="component" value="Chromosome"/>
</dbReference>
<dbReference type="GO" id="GO:0005886">
    <property type="term" value="C:plasma membrane"/>
    <property type="evidence" value="ECO:0007669"/>
    <property type="project" value="UniProtKB-SubCell"/>
</dbReference>
<dbReference type="GO" id="GO:0008137">
    <property type="term" value="F:NADH dehydrogenase (ubiquinone) activity"/>
    <property type="evidence" value="ECO:0007669"/>
    <property type="project" value="InterPro"/>
</dbReference>
<dbReference type="GO" id="GO:0050136">
    <property type="term" value="F:NADH:ubiquinone reductase (non-electrogenic) activity"/>
    <property type="evidence" value="ECO:0007669"/>
    <property type="project" value="UniProtKB-UniRule"/>
</dbReference>
<dbReference type="GO" id="GO:0048038">
    <property type="term" value="F:quinone binding"/>
    <property type="evidence" value="ECO:0007669"/>
    <property type="project" value="UniProtKB-KW"/>
</dbReference>
<dbReference type="GO" id="GO:0042773">
    <property type="term" value="P:ATP synthesis coupled electron transport"/>
    <property type="evidence" value="ECO:0007669"/>
    <property type="project" value="InterPro"/>
</dbReference>
<dbReference type="HAMAP" id="MF_00445">
    <property type="entry name" value="NDH1_NuoN_1"/>
    <property type="match status" value="1"/>
</dbReference>
<dbReference type="InterPro" id="IPR010096">
    <property type="entry name" value="NADH-Q_OxRdtase_suN/2"/>
</dbReference>
<dbReference type="InterPro" id="IPR001750">
    <property type="entry name" value="ND/Mrp_TM"/>
</dbReference>
<dbReference type="NCBIfam" id="TIGR01770">
    <property type="entry name" value="NDH_I_N"/>
    <property type="match status" value="1"/>
</dbReference>
<dbReference type="NCBIfam" id="NF004439">
    <property type="entry name" value="PRK05777.1-1"/>
    <property type="match status" value="1"/>
</dbReference>
<dbReference type="PANTHER" id="PTHR22773">
    <property type="entry name" value="NADH DEHYDROGENASE"/>
    <property type="match status" value="1"/>
</dbReference>
<dbReference type="Pfam" id="PF00361">
    <property type="entry name" value="Proton_antipo_M"/>
    <property type="match status" value="1"/>
</dbReference>
<comment type="function">
    <text evidence="1">NDH-1 shuttles electrons from NADH, via FMN and iron-sulfur (Fe-S) centers, to quinones in the respiratory chain. The immediate electron acceptor for the enzyme in this species is believed to be ubiquinone. Couples the redox reaction to proton translocation (for every two electrons transferred, four hydrogen ions are translocated across the cytoplasmic membrane), and thus conserves the redox energy in a proton gradient.</text>
</comment>
<comment type="catalytic activity">
    <reaction evidence="1">
        <text>a quinone + NADH + 5 H(+)(in) = a quinol + NAD(+) + 4 H(+)(out)</text>
        <dbReference type="Rhea" id="RHEA:57888"/>
        <dbReference type="ChEBI" id="CHEBI:15378"/>
        <dbReference type="ChEBI" id="CHEBI:24646"/>
        <dbReference type="ChEBI" id="CHEBI:57540"/>
        <dbReference type="ChEBI" id="CHEBI:57945"/>
        <dbReference type="ChEBI" id="CHEBI:132124"/>
    </reaction>
</comment>
<comment type="subunit">
    <text evidence="1">NDH-1 is composed of 13 different subunits. Subunits NuoA, H, J, K, L, M, N constitute the membrane sector of the complex.</text>
</comment>
<comment type="subcellular location">
    <subcellularLocation>
        <location evidence="1">Cell inner membrane</location>
        <topology evidence="1">Multi-pass membrane protein</topology>
    </subcellularLocation>
</comment>
<comment type="similarity">
    <text evidence="1">Belongs to the complex I subunit 2 family.</text>
</comment>
<gene>
    <name evidence="1" type="primary">nuoN</name>
    <name type="ordered locus">SARI_00583</name>
</gene>
<protein>
    <recommendedName>
        <fullName evidence="1">NADH-quinone oxidoreductase subunit N</fullName>
        <ecNumber evidence="1">7.1.1.-</ecNumber>
    </recommendedName>
    <alternativeName>
        <fullName evidence="1">NADH dehydrogenase I subunit N</fullName>
    </alternativeName>
    <alternativeName>
        <fullName evidence="1">NDH-1 subunit N</fullName>
    </alternativeName>
</protein>
<keyword id="KW-0997">Cell inner membrane</keyword>
<keyword id="KW-1003">Cell membrane</keyword>
<keyword id="KW-0472">Membrane</keyword>
<keyword id="KW-0520">NAD</keyword>
<keyword id="KW-0874">Quinone</keyword>
<keyword id="KW-1185">Reference proteome</keyword>
<keyword id="KW-1278">Translocase</keyword>
<keyword id="KW-0812">Transmembrane</keyword>
<keyword id="KW-1133">Transmembrane helix</keyword>
<keyword id="KW-0813">Transport</keyword>
<keyword id="KW-0830">Ubiquinone</keyword>
<evidence type="ECO:0000255" key="1">
    <source>
        <dbReference type="HAMAP-Rule" id="MF_00445"/>
    </source>
</evidence>
<name>NUON_SALAR</name>
<accession>A9MJA9</accession>
<proteinExistence type="inferred from homology"/>
<organism>
    <name type="scientific">Salmonella arizonae (strain ATCC BAA-731 / CDC346-86 / RSK2980)</name>
    <dbReference type="NCBI Taxonomy" id="41514"/>
    <lineage>
        <taxon>Bacteria</taxon>
        <taxon>Pseudomonadati</taxon>
        <taxon>Pseudomonadota</taxon>
        <taxon>Gammaproteobacteria</taxon>
        <taxon>Enterobacterales</taxon>
        <taxon>Enterobacteriaceae</taxon>
        <taxon>Salmonella</taxon>
    </lineage>
</organism>
<feature type="chain" id="PRO_1000087449" description="NADH-quinone oxidoreductase subunit N">
    <location>
        <begin position="1"/>
        <end position="485"/>
    </location>
</feature>
<feature type="transmembrane region" description="Helical" evidence="1">
    <location>
        <begin position="8"/>
        <end position="28"/>
    </location>
</feature>
<feature type="transmembrane region" description="Helical" evidence="1">
    <location>
        <begin position="35"/>
        <end position="55"/>
    </location>
</feature>
<feature type="transmembrane region" description="Helical" evidence="1">
    <location>
        <begin position="71"/>
        <end position="91"/>
    </location>
</feature>
<feature type="transmembrane region" description="Helical" evidence="1">
    <location>
        <begin position="105"/>
        <end position="125"/>
    </location>
</feature>
<feature type="transmembrane region" description="Helical" evidence="1">
    <location>
        <begin position="127"/>
        <end position="147"/>
    </location>
</feature>
<feature type="transmembrane region" description="Helical" evidence="1">
    <location>
        <begin position="159"/>
        <end position="179"/>
    </location>
</feature>
<feature type="transmembrane region" description="Helical" evidence="1">
    <location>
        <begin position="203"/>
        <end position="223"/>
    </location>
</feature>
<feature type="transmembrane region" description="Helical" evidence="1">
    <location>
        <begin position="235"/>
        <end position="255"/>
    </location>
</feature>
<feature type="transmembrane region" description="Helical" evidence="1">
    <location>
        <begin position="271"/>
        <end position="291"/>
    </location>
</feature>
<feature type="transmembrane region" description="Helical" evidence="1">
    <location>
        <begin position="297"/>
        <end position="317"/>
    </location>
</feature>
<feature type="transmembrane region" description="Helical" evidence="1">
    <location>
        <begin position="326"/>
        <end position="346"/>
    </location>
</feature>
<feature type="transmembrane region" description="Helical" evidence="1">
    <location>
        <begin position="373"/>
        <end position="393"/>
    </location>
</feature>
<feature type="transmembrane region" description="Helical" evidence="1">
    <location>
        <begin position="408"/>
        <end position="430"/>
    </location>
</feature>
<feature type="transmembrane region" description="Helical" evidence="1">
    <location>
        <begin position="455"/>
        <end position="475"/>
    </location>
</feature>